<sequence>MPTLLLTGFEPFHTHPDNPSAQAAQELHGLELPGGWGVHSALLPVEPHAAGAALTRLLSEQDPGAVLLTGLAAGRPQVTLERVGVGVMDFQIPDNAGQTYRDQPIEPDAPAAYLATLPLRAILAAWREAEIPGDISNSAGLYVCNFVLYHALHWLREHGRGAVPCGFLHVPANAAVALAVPADRPPLPYLPQSEITRAVRVAAEAITAQSSVLQMGKM</sequence>
<name>PCP_DEIRA</name>
<protein>
    <recommendedName>
        <fullName>Pyrrolidone-carboxylate peptidase</fullName>
        <ecNumber>3.4.19.3</ecNumber>
    </recommendedName>
    <alternativeName>
        <fullName>5-oxoprolyl-peptidase</fullName>
    </alternativeName>
    <alternativeName>
        <fullName>Pyroglutamyl-peptidase I</fullName>
        <shortName>PGP-I</shortName>
        <shortName>Pyrase</shortName>
    </alternativeName>
</protein>
<dbReference type="EC" id="3.4.19.3"/>
<dbReference type="EMBL" id="AE000513">
    <property type="protein sequence ID" value="AAF10067.1"/>
    <property type="molecule type" value="Genomic_DNA"/>
</dbReference>
<dbReference type="PIR" id="E75512">
    <property type="entry name" value="E75512"/>
</dbReference>
<dbReference type="RefSeq" id="NP_294213.1">
    <property type="nucleotide sequence ID" value="NC_001263.1"/>
</dbReference>
<dbReference type="RefSeq" id="WP_010887135.1">
    <property type="nucleotide sequence ID" value="NC_001263.1"/>
</dbReference>
<dbReference type="PDB" id="5Z40">
    <property type="method" value="X-ray"/>
    <property type="resolution" value="1.84 A"/>
    <property type="chains" value="A/B=1-218"/>
</dbReference>
<dbReference type="PDB" id="5Z47">
    <property type="method" value="X-ray"/>
    <property type="resolution" value="1.70 A"/>
    <property type="chains" value="A/B=1-218"/>
</dbReference>
<dbReference type="PDB" id="5Z48">
    <property type="method" value="X-ray"/>
    <property type="resolution" value="1.55 A"/>
    <property type="chains" value="A/B=1-218"/>
</dbReference>
<dbReference type="PDBsum" id="5Z40"/>
<dbReference type="PDBsum" id="5Z47"/>
<dbReference type="PDBsum" id="5Z48"/>
<dbReference type="SMR" id="Q9RX25"/>
<dbReference type="FunCoup" id="Q9RX25">
    <property type="interactions" value="60"/>
</dbReference>
<dbReference type="STRING" id="243230.DR_0490"/>
<dbReference type="MEROPS" id="C15.001"/>
<dbReference type="PaxDb" id="243230-DR_0490"/>
<dbReference type="EnsemblBacteria" id="AAF10067">
    <property type="protein sequence ID" value="AAF10067"/>
    <property type="gene ID" value="DR_0490"/>
</dbReference>
<dbReference type="GeneID" id="69516725"/>
<dbReference type="KEGG" id="dra:DR_0490"/>
<dbReference type="PATRIC" id="fig|243230.17.peg.668"/>
<dbReference type="eggNOG" id="COG2039">
    <property type="taxonomic scope" value="Bacteria"/>
</dbReference>
<dbReference type="HOGENOM" id="CLU_043960_4_3_0"/>
<dbReference type="InParanoid" id="Q9RX25"/>
<dbReference type="OrthoDB" id="9779738at2"/>
<dbReference type="Proteomes" id="UP000002524">
    <property type="component" value="Chromosome 1"/>
</dbReference>
<dbReference type="GO" id="GO:0005829">
    <property type="term" value="C:cytosol"/>
    <property type="evidence" value="ECO:0007669"/>
    <property type="project" value="InterPro"/>
</dbReference>
<dbReference type="GO" id="GO:0016920">
    <property type="term" value="F:pyroglutamyl-peptidase activity"/>
    <property type="evidence" value="ECO:0007669"/>
    <property type="project" value="UniProtKB-UniRule"/>
</dbReference>
<dbReference type="GO" id="GO:0006508">
    <property type="term" value="P:proteolysis"/>
    <property type="evidence" value="ECO:0007669"/>
    <property type="project" value="UniProtKB-KW"/>
</dbReference>
<dbReference type="CDD" id="cd00501">
    <property type="entry name" value="Peptidase_C15"/>
    <property type="match status" value="1"/>
</dbReference>
<dbReference type="Gene3D" id="3.40.630.20">
    <property type="entry name" value="Peptidase C15, pyroglutamyl peptidase I-like"/>
    <property type="match status" value="1"/>
</dbReference>
<dbReference type="HAMAP" id="MF_00417">
    <property type="entry name" value="Pyrrolid_peptidase"/>
    <property type="match status" value="1"/>
</dbReference>
<dbReference type="InterPro" id="IPR000816">
    <property type="entry name" value="Peptidase_C15"/>
</dbReference>
<dbReference type="InterPro" id="IPR016125">
    <property type="entry name" value="Peptidase_C15-like"/>
</dbReference>
<dbReference type="InterPro" id="IPR036440">
    <property type="entry name" value="Peptidase_C15-like_sf"/>
</dbReference>
<dbReference type="InterPro" id="IPR029762">
    <property type="entry name" value="PGP-I_bact-type"/>
</dbReference>
<dbReference type="InterPro" id="IPR033694">
    <property type="entry name" value="PGPEP1_Cys_AS"/>
</dbReference>
<dbReference type="InterPro" id="IPR033693">
    <property type="entry name" value="PGPEP1_Glu_AS"/>
</dbReference>
<dbReference type="NCBIfam" id="NF009675">
    <property type="entry name" value="PRK13196.1"/>
    <property type="match status" value="1"/>
</dbReference>
<dbReference type="PANTHER" id="PTHR23402">
    <property type="entry name" value="PROTEASE FAMILY C15 PYROGLUTAMYL-PEPTIDASE I-RELATED"/>
    <property type="match status" value="1"/>
</dbReference>
<dbReference type="PANTHER" id="PTHR23402:SF1">
    <property type="entry name" value="PYROGLUTAMYL-PEPTIDASE I"/>
    <property type="match status" value="1"/>
</dbReference>
<dbReference type="Pfam" id="PF01470">
    <property type="entry name" value="Peptidase_C15"/>
    <property type="match status" value="1"/>
</dbReference>
<dbReference type="PIRSF" id="PIRSF015592">
    <property type="entry name" value="Prld-crbxl_pptds"/>
    <property type="match status" value="1"/>
</dbReference>
<dbReference type="PRINTS" id="PR00706">
    <property type="entry name" value="PYROGLUPTASE"/>
</dbReference>
<dbReference type="SUPFAM" id="SSF53182">
    <property type="entry name" value="Pyrrolidone carboxyl peptidase (pyroglutamate aminopeptidase)"/>
    <property type="match status" value="1"/>
</dbReference>
<dbReference type="PROSITE" id="PS01334">
    <property type="entry name" value="PYRASE_CYS"/>
    <property type="match status" value="1"/>
</dbReference>
<dbReference type="PROSITE" id="PS01333">
    <property type="entry name" value="PYRASE_GLU"/>
    <property type="match status" value="1"/>
</dbReference>
<keyword id="KW-0002">3D-structure</keyword>
<keyword id="KW-0963">Cytoplasm</keyword>
<keyword id="KW-0378">Hydrolase</keyword>
<keyword id="KW-0645">Protease</keyword>
<keyword id="KW-1185">Reference proteome</keyword>
<keyword id="KW-0788">Thiol protease</keyword>
<reference key="1">
    <citation type="journal article" date="1999" name="Science">
        <title>Genome sequence of the radioresistant bacterium Deinococcus radiodurans R1.</title>
        <authorList>
            <person name="White O."/>
            <person name="Eisen J.A."/>
            <person name="Heidelberg J.F."/>
            <person name="Hickey E.K."/>
            <person name="Peterson J.D."/>
            <person name="Dodson R.J."/>
            <person name="Haft D.H."/>
            <person name="Gwinn M.L."/>
            <person name="Nelson W.C."/>
            <person name="Richardson D.L."/>
            <person name="Moffat K.S."/>
            <person name="Qin H."/>
            <person name="Jiang L."/>
            <person name="Pamphile W."/>
            <person name="Crosby M."/>
            <person name="Shen M."/>
            <person name="Vamathevan J.J."/>
            <person name="Lam P."/>
            <person name="McDonald L.A."/>
            <person name="Utterback T.R."/>
            <person name="Zalewski C."/>
            <person name="Makarova K.S."/>
            <person name="Aravind L."/>
            <person name="Daly M.J."/>
            <person name="Minton K.W."/>
            <person name="Fleischmann R.D."/>
            <person name="Ketchum K.A."/>
            <person name="Nelson K.E."/>
            <person name="Salzberg S.L."/>
            <person name="Smith H.O."/>
            <person name="Venter J.C."/>
            <person name="Fraser C.M."/>
        </authorList>
    </citation>
    <scope>NUCLEOTIDE SEQUENCE [LARGE SCALE GENOMIC DNA]</scope>
    <source>
        <strain>ATCC 13939 / DSM 20539 / JCM 16871 / CCUG 27074 / LMG 4051 / NBRC 15346 / NCIMB 9279 / VKM B-1422 / R1</strain>
    </source>
</reference>
<gene>
    <name type="primary">pcp</name>
    <name type="ordered locus">DR_0490</name>
</gene>
<proteinExistence type="evidence at protein level"/>
<accession>Q9RX25</accession>
<evidence type="ECO:0000250" key="1"/>
<evidence type="ECO:0000305" key="2"/>
<evidence type="ECO:0007829" key="3">
    <source>
        <dbReference type="PDB" id="5Z48"/>
    </source>
</evidence>
<feature type="chain" id="PRO_0000184716" description="Pyrrolidone-carboxylate peptidase">
    <location>
        <begin position="1"/>
        <end position="218"/>
    </location>
</feature>
<feature type="active site" evidence="1">
    <location>
        <position position="81"/>
    </location>
</feature>
<feature type="active site" evidence="1">
    <location>
        <position position="144"/>
    </location>
</feature>
<feature type="active site" evidence="1">
    <location>
        <position position="169"/>
    </location>
</feature>
<feature type="strand" evidence="3">
    <location>
        <begin position="3"/>
        <end position="9"/>
    </location>
</feature>
<feature type="helix" evidence="3">
    <location>
        <begin position="19"/>
        <end position="27"/>
    </location>
</feature>
<feature type="helix" evidence="3">
    <location>
        <begin position="33"/>
        <end position="35"/>
    </location>
</feature>
<feature type="strand" evidence="3">
    <location>
        <begin position="36"/>
        <end position="43"/>
    </location>
</feature>
<feature type="helix" evidence="3">
    <location>
        <begin position="47"/>
        <end position="61"/>
    </location>
</feature>
<feature type="strand" evidence="3">
    <location>
        <begin position="64"/>
        <end position="71"/>
    </location>
</feature>
<feature type="strand" evidence="3">
    <location>
        <begin position="76"/>
        <end position="81"/>
    </location>
</feature>
<feature type="strand" evidence="3">
    <location>
        <begin position="83"/>
        <end position="88"/>
    </location>
</feature>
<feature type="strand" evidence="3">
    <location>
        <begin position="101"/>
        <end position="106"/>
    </location>
</feature>
<feature type="strand" evidence="3">
    <location>
        <begin position="111"/>
        <end position="114"/>
    </location>
</feature>
<feature type="helix" evidence="3">
    <location>
        <begin position="119"/>
        <end position="128"/>
    </location>
</feature>
<feature type="strand" evidence="3">
    <location>
        <begin position="133"/>
        <end position="137"/>
    </location>
</feature>
<feature type="helix" evidence="3">
    <location>
        <begin position="143"/>
        <end position="157"/>
    </location>
</feature>
<feature type="strand" evidence="3">
    <location>
        <begin position="165"/>
        <end position="170"/>
    </location>
</feature>
<feature type="helix" evidence="3">
    <location>
        <begin position="174"/>
        <end position="179"/>
    </location>
</feature>
<feature type="helix" evidence="3">
    <location>
        <begin position="192"/>
        <end position="209"/>
    </location>
</feature>
<organism>
    <name type="scientific">Deinococcus radiodurans (strain ATCC 13939 / DSM 20539 / JCM 16871 / CCUG 27074 / LMG 4051 / NBRC 15346 / NCIMB 9279 / VKM B-1422 / R1)</name>
    <dbReference type="NCBI Taxonomy" id="243230"/>
    <lineage>
        <taxon>Bacteria</taxon>
        <taxon>Thermotogati</taxon>
        <taxon>Deinococcota</taxon>
        <taxon>Deinococci</taxon>
        <taxon>Deinococcales</taxon>
        <taxon>Deinococcaceae</taxon>
        <taxon>Deinococcus</taxon>
    </lineage>
</organism>
<comment type="function">
    <text evidence="1">Removes 5-oxoproline from various penultimate amino acid residues except L-proline.</text>
</comment>
<comment type="catalytic activity">
    <reaction>
        <text>Release of an N-terminal pyroglutamyl group from a polypeptide, the second amino acid generally not being Pro.</text>
        <dbReference type="EC" id="3.4.19.3"/>
    </reaction>
</comment>
<comment type="subunit">
    <text evidence="1">Homotetramer.</text>
</comment>
<comment type="subcellular location">
    <subcellularLocation>
        <location evidence="1">Cytoplasm</location>
    </subcellularLocation>
</comment>
<comment type="similarity">
    <text evidence="2">Belongs to the peptidase C15 family.</text>
</comment>